<feature type="chain" id="PRO_0000152601" description="Lysine--tRNA ligase">
    <location>
        <begin position="1"/>
        <end position="576"/>
    </location>
</feature>
<feature type="binding site" evidence="1">
    <location>
        <position position="413"/>
    </location>
    <ligand>
        <name>Mg(2+)</name>
        <dbReference type="ChEBI" id="CHEBI:18420"/>
        <label>1</label>
    </ligand>
</feature>
<feature type="binding site" evidence="1">
    <location>
        <position position="420"/>
    </location>
    <ligand>
        <name>Mg(2+)</name>
        <dbReference type="ChEBI" id="CHEBI:18420"/>
        <label>1</label>
    </ligand>
</feature>
<feature type="binding site" evidence="1">
    <location>
        <position position="420"/>
    </location>
    <ligand>
        <name>Mg(2+)</name>
        <dbReference type="ChEBI" id="CHEBI:18420"/>
        <label>2</label>
    </ligand>
</feature>
<proteinExistence type="inferred from homology"/>
<organism>
    <name type="scientific">Bacteroides thetaiotaomicron (strain ATCC 29148 / DSM 2079 / JCM 5827 / CCUG 10774 / NCTC 10582 / VPI-5482 / E50)</name>
    <dbReference type="NCBI Taxonomy" id="226186"/>
    <lineage>
        <taxon>Bacteria</taxon>
        <taxon>Pseudomonadati</taxon>
        <taxon>Bacteroidota</taxon>
        <taxon>Bacteroidia</taxon>
        <taxon>Bacteroidales</taxon>
        <taxon>Bacteroidaceae</taxon>
        <taxon>Bacteroides</taxon>
    </lineage>
</organism>
<evidence type="ECO:0000255" key="1">
    <source>
        <dbReference type="HAMAP-Rule" id="MF_00252"/>
    </source>
</evidence>
<accession>Q8A5W4</accession>
<keyword id="KW-0030">Aminoacyl-tRNA synthetase</keyword>
<keyword id="KW-0067">ATP-binding</keyword>
<keyword id="KW-0963">Cytoplasm</keyword>
<keyword id="KW-0436">Ligase</keyword>
<keyword id="KW-0460">Magnesium</keyword>
<keyword id="KW-0479">Metal-binding</keyword>
<keyword id="KW-0547">Nucleotide-binding</keyword>
<keyword id="KW-0648">Protein biosynthesis</keyword>
<keyword id="KW-1185">Reference proteome</keyword>
<name>SYK_BACTN</name>
<comment type="catalytic activity">
    <reaction evidence="1">
        <text>tRNA(Lys) + L-lysine + ATP = L-lysyl-tRNA(Lys) + AMP + diphosphate</text>
        <dbReference type="Rhea" id="RHEA:20792"/>
        <dbReference type="Rhea" id="RHEA-COMP:9696"/>
        <dbReference type="Rhea" id="RHEA-COMP:9697"/>
        <dbReference type="ChEBI" id="CHEBI:30616"/>
        <dbReference type="ChEBI" id="CHEBI:32551"/>
        <dbReference type="ChEBI" id="CHEBI:33019"/>
        <dbReference type="ChEBI" id="CHEBI:78442"/>
        <dbReference type="ChEBI" id="CHEBI:78529"/>
        <dbReference type="ChEBI" id="CHEBI:456215"/>
        <dbReference type="EC" id="6.1.1.6"/>
    </reaction>
</comment>
<comment type="cofactor">
    <cofactor evidence="1">
        <name>Mg(2+)</name>
        <dbReference type="ChEBI" id="CHEBI:18420"/>
    </cofactor>
    <text evidence="1">Binds 3 Mg(2+) ions per subunit.</text>
</comment>
<comment type="subunit">
    <text evidence="1">Homodimer.</text>
</comment>
<comment type="subcellular location">
    <subcellularLocation>
        <location evidence="1">Cytoplasm</location>
    </subcellularLocation>
</comment>
<comment type="similarity">
    <text evidence="1">Belongs to the class-II aminoacyl-tRNA synthetase family.</text>
</comment>
<dbReference type="EC" id="6.1.1.6" evidence="1"/>
<dbReference type="EMBL" id="AE015928">
    <property type="protein sequence ID" value="AAO77229.1"/>
    <property type="molecule type" value="Genomic_DNA"/>
</dbReference>
<dbReference type="RefSeq" id="NP_811035.1">
    <property type="nucleotide sequence ID" value="NC_004663.1"/>
</dbReference>
<dbReference type="RefSeq" id="WP_008759776.1">
    <property type="nucleotide sequence ID" value="NZ_UYXG01000026.1"/>
</dbReference>
<dbReference type="SMR" id="Q8A5W4"/>
<dbReference type="FunCoup" id="Q8A5W4">
    <property type="interactions" value="629"/>
</dbReference>
<dbReference type="STRING" id="226186.BT_2122"/>
<dbReference type="PaxDb" id="226186-BT_2122"/>
<dbReference type="EnsemblBacteria" id="AAO77229">
    <property type="protein sequence ID" value="AAO77229"/>
    <property type="gene ID" value="BT_2122"/>
</dbReference>
<dbReference type="GeneID" id="60928110"/>
<dbReference type="KEGG" id="bth:BT_2122"/>
<dbReference type="PATRIC" id="fig|226186.12.peg.2184"/>
<dbReference type="eggNOG" id="COG1190">
    <property type="taxonomic scope" value="Bacteria"/>
</dbReference>
<dbReference type="HOGENOM" id="CLU_008255_6_0_10"/>
<dbReference type="InParanoid" id="Q8A5W4"/>
<dbReference type="OrthoDB" id="9801152at2"/>
<dbReference type="Proteomes" id="UP000001414">
    <property type="component" value="Chromosome"/>
</dbReference>
<dbReference type="GO" id="GO:0005737">
    <property type="term" value="C:cytoplasm"/>
    <property type="evidence" value="ECO:0000318"/>
    <property type="project" value="GO_Central"/>
</dbReference>
<dbReference type="GO" id="GO:0005829">
    <property type="term" value="C:cytosol"/>
    <property type="evidence" value="ECO:0000318"/>
    <property type="project" value="GO_Central"/>
</dbReference>
<dbReference type="GO" id="GO:0005524">
    <property type="term" value="F:ATP binding"/>
    <property type="evidence" value="ECO:0007669"/>
    <property type="project" value="UniProtKB-UniRule"/>
</dbReference>
<dbReference type="GO" id="GO:0004824">
    <property type="term" value="F:lysine-tRNA ligase activity"/>
    <property type="evidence" value="ECO:0000318"/>
    <property type="project" value="GO_Central"/>
</dbReference>
<dbReference type="GO" id="GO:0000287">
    <property type="term" value="F:magnesium ion binding"/>
    <property type="evidence" value="ECO:0007669"/>
    <property type="project" value="UniProtKB-UniRule"/>
</dbReference>
<dbReference type="GO" id="GO:0000049">
    <property type="term" value="F:tRNA binding"/>
    <property type="evidence" value="ECO:0000318"/>
    <property type="project" value="GO_Central"/>
</dbReference>
<dbReference type="GO" id="GO:0006430">
    <property type="term" value="P:lysyl-tRNA aminoacylation"/>
    <property type="evidence" value="ECO:0000318"/>
    <property type="project" value="GO_Central"/>
</dbReference>
<dbReference type="CDD" id="cd00775">
    <property type="entry name" value="LysRS_core"/>
    <property type="match status" value="1"/>
</dbReference>
<dbReference type="CDD" id="cd04322">
    <property type="entry name" value="LysRS_N"/>
    <property type="match status" value="1"/>
</dbReference>
<dbReference type="FunFam" id="2.40.50.140:FF:000024">
    <property type="entry name" value="Lysine--tRNA ligase"/>
    <property type="match status" value="1"/>
</dbReference>
<dbReference type="FunFam" id="3.30.930.10:FF:000064">
    <property type="entry name" value="Lysine--tRNA ligase"/>
    <property type="match status" value="1"/>
</dbReference>
<dbReference type="Gene3D" id="3.30.930.10">
    <property type="entry name" value="Bira Bifunctional Protein, Domain 2"/>
    <property type="match status" value="1"/>
</dbReference>
<dbReference type="Gene3D" id="2.40.50.140">
    <property type="entry name" value="Nucleic acid-binding proteins"/>
    <property type="match status" value="1"/>
</dbReference>
<dbReference type="HAMAP" id="MF_00252">
    <property type="entry name" value="Lys_tRNA_synth_class2"/>
    <property type="match status" value="1"/>
</dbReference>
<dbReference type="InterPro" id="IPR004364">
    <property type="entry name" value="Aa-tRNA-synt_II"/>
</dbReference>
<dbReference type="InterPro" id="IPR006195">
    <property type="entry name" value="aa-tRNA-synth_II"/>
</dbReference>
<dbReference type="InterPro" id="IPR045864">
    <property type="entry name" value="aa-tRNA-synth_II/BPL/LPL"/>
</dbReference>
<dbReference type="InterPro" id="IPR025567">
    <property type="entry name" value="DUF4332"/>
</dbReference>
<dbReference type="InterPro" id="IPR002313">
    <property type="entry name" value="Lys-tRNA-ligase_II"/>
</dbReference>
<dbReference type="InterPro" id="IPR044136">
    <property type="entry name" value="Lys-tRNA-ligase_II_N"/>
</dbReference>
<dbReference type="InterPro" id="IPR018149">
    <property type="entry name" value="Lys-tRNA-synth_II_C"/>
</dbReference>
<dbReference type="InterPro" id="IPR012340">
    <property type="entry name" value="NA-bd_OB-fold"/>
</dbReference>
<dbReference type="InterPro" id="IPR004365">
    <property type="entry name" value="NA-bd_OB_tRNA"/>
</dbReference>
<dbReference type="NCBIfam" id="TIGR00499">
    <property type="entry name" value="lysS_bact"/>
    <property type="match status" value="1"/>
</dbReference>
<dbReference type="NCBIfam" id="NF001756">
    <property type="entry name" value="PRK00484.1"/>
    <property type="match status" value="1"/>
</dbReference>
<dbReference type="PANTHER" id="PTHR42918:SF15">
    <property type="entry name" value="LYSINE--TRNA LIGASE, CHLOROPLASTIC_MITOCHONDRIAL"/>
    <property type="match status" value="1"/>
</dbReference>
<dbReference type="PANTHER" id="PTHR42918">
    <property type="entry name" value="LYSYL-TRNA SYNTHETASE"/>
    <property type="match status" value="1"/>
</dbReference>
<dbReference type="Pfam" id="PF14229">
    <property type="entry name" value="DUF4332"/>
    <property type="match status" value="1"/>
</dbReference>
<dbReference type="Pfam" id="PF00152">
    <property type="entry name" value="tRNA-synt_2"/>
    <property type="match status" value="1"/>
</dbReference>
<dbReference type="Pfam" id="PF01336">
    <property type="entry name" value="tRNA_anti-codon"/>
    <property type="match status" value="1"/>
</dbReference>
<dbReference type="PRINTS" id="PR00982">
    <property type="entry name" value="TRNASYNTHLYS"/>
</dbReference>
<dbReference type="SUPFAM" id="SSF55681">
    <property type="entry name" value="Class II aaRS and biotin synthetases"/>
    <property type="match status" value="1"/>
</dbReference>
<dbReference type="SUPFAM" id="SSF50249">
    <property type="entry name" value="Nucleic acid-binding proteins"/>
    <property type="match status" value="1"/>
</dbReference>
<dbReference type="PROSITE" id="PS50862">
    <property type="entry name" value="AA_TRNA_LIGASE_II"/>
    <property type="match status" value="1"/>
</dbReference>
<sequence>MNILELSEQEIIRRNSLNELRAMGIDPYPAAEYVTNAFSTDIKAEFKDEDEPRQVSVAGRIMSRRVMGKASFIELQDSKGRIQVYITRDDICPGEDKELYNSVFKRLLDLGDFVGIEGFVFRTQMGEISIHAKKLTVLAKSIKPLPIVKYKDGVAYDSFEDPELRYRQRYVDLVVNEGIKETFEKRATVVRTLRNALDEAGYTEVETPILQSIAGGASARPFITHHNSLDIDLYLRIATELYLKRLIVGGFEGVYEIGKNFRNEGMDRTHNPEFTCMELYVQYKDYNWMMSFTEKLLERICIAVNGSTETVVDGKTISFKAPYRRLPILDAIKEKTGYDLNGKSEEEIRQICKELKMEEIDDTMGKGKLIDEIFGEFCEGSYIQPTFITDYPVEMSPLTKMHRSKPGLTERFELMVNGKELANAYSELNDPLDQEERFKEQMRLADKGDDEAMIIDQDFLRALQYGMPPTSGIGIGIDRLVMLMTGQTTIQEVLFFPQMRPEKVIKKDPAAKYMELGIAEDWVPVIQKAGYNTVADMQDVNPQKLHQDICGINKKYKLELTNPSVNDVTEWINKLK</sequence>
<protein>
    <recommendedName>
        <fullName evidence="1">Lysine--tRNA ligase</fullName>
        <ecNumber evidence="1">6.1.1.6</ecNumber>
    </recommendedName>
    <alternativeName>
        <fullName evidence="1">Lysyl-tRNA synthetase</fullName>
        <shortName evidence="1">LysRS</shortName>
    </alternativeName>
</protein>
<reference key="1">
    <citation type="journal article" date="2003" name="Science">
        <title>A genomic view of the human-Bacteroides thetaiotaomicron symbiosis.</title>
        <authorList>
            <person name="Xu J."/>
            <person name="Bjursell M.K."/>
            <person name="Himrod J."/>
            <person name="Deng S."/>
            <person name="Carmichael L.K."/>
            <person name="Chiang H.C."/>
            <person name="Hooper L.V."/>
            <person name="Gordon J.I."/>
        </authorList>
    </citation>
    <scope>NUCLEOTIDE SEQUENCE [LARGE SCALE GENOMIC DNA]</scope>
    <source>
        <strain>ATCC 29148 / DSM 2079 / JCM 5827 / CCUG 10774 / NCTC 10582 / VPI-5482 / E50</strain>
    </source>
</reference>
<gene>
    <name evidence="1" type="primary">lysS</name>
    <name type="ordered locus">BT_2122</name>
</gene>